<organism>
    <name type="scientific">Acinetobacter baumannii (strain SDF)</name>
    <dbReference type="NCBI Taxonomy" id="509170"/>
    <lineage>
        <taxon>Bacteria</taxon>
        <taxon>Pseudomonadati</taxon>
        <taxon>Pseudomonadota</taxon>
        <taxon>Gammaproteobacteria</taxon>
        <taxon>Moraxellales</taxon>
        <taxon>Moraxellaceae</taxon>
        <taxon>Acinetobacter</taxon>
        <taxon>Acinetobacter calcoaceticus/baumannii complex</taxon>
    </lineage>
</organism>
<keyword id="KW-0143">Chaperone</keyword>
<keyword id="KW-0963">Cytoplasm</keyword>
<keyword id="KW-0533">Nickel</keyword>
<reference key="1">
    <citation type="journal article" date="2008" name="PLoS ONE">
        <title>Comparative analysis of Acinetobacters: three genomes for three lifestyles.</title>
        <authorList>
            <person name="Vallenet D."/>
            <person name="Nordmann P."/>
            <person name="Barbe V."/>
            <person name="Poirel L."/>
            <person name="Mangenot S."/>
            <person name="Bataille E."/>
            <person name="Dossat C."/>
            <person name="Gas S."/>
            <person name="Kreimeyer A."/>
            <person name="Lenoble P."/>
            <person name="Oztas S."/>
            <person name="Poulain J."/>
            <person name="Segurens B."/>
            <person name="Robert C."/>
            <person name="Abergel C."/>
            <person name="Claverie J.-M."/>
            <person name="Raoult D."/>
            <person name="Medigue C."/>
            <person name="Weissenbach J."/>
            <person name="Cruveiller S."/>
        </authorList>
    </citation>
    <scope>NUCLEOTIDE SEQUENCE [LARGE SCALE GENOMIC DNA]</scope>
    <source>
        <strain>SDF</strain>
    </source>
</reference>
<accession>B0VSB7</accession>
<feature type="chain" id="PRO_1000197431" description="Urease accessory protein UreE">
    <location>
        <begin position="1"/>
        <end position="160"/>
    </location>
</feature>
<protein>
    <recommendedName>
        <fullName evidence="1">Urease accessory protein UreE</fullName>
    </recommendedName>
</protein>
<evidence type="ECO:0000255" key="1">
    <source>
        <dbReference type="HAMAP-Rule" id="MF_00822"/>
    </source>
</evidence>
<gene>
    <name evidence="1" type="primary">ureE</name>
    <name type="ordered locus">ABSDF2372</name>
</gene>
<name>UREE_ACIBS</name>
<proteinExistence type="inferred from homology"/>
<sequence>MKIYTQRLEDISPDQAFETVELTFDTRQKSRFRAALASGVDIGADLPRTGILRSGSYIATQEGDVLRVDAKPERLMKVTAQTEFDLLKAAYHLGNRHVPLMLTPTALYFEPDHVLAEMVEGLGLTVTETDHPFEPESGAYAQHSHDHRLSPIKALHHVHS</sequence>
<comment type="function">
    <text evidence="1">Involved in urease metallocenter assembly. Binds nickel. Probably functions as a nickel donor during metallocenter assembly.</text>
</comment>
<comment type="subcellular location">
    <subcellularLocation>
        <location evidence="1">Cytoplasm</location>
    </subcellularLocation>
</comment>
<comment type="similarity">
    <text evidence="1">Belongs to the UreE family.</text>
</comment>
<dbReference type="EMBL" id="CU468230">
    <property type="protein sequence ID" value="CAP01685.1"/>
    <property type="molecule type" value="Genomic_DNA"/>
</dbReference>
<dbReference type="SMR" id="B0VSB7"/>
<dbReference type="KEGG" id="abm:ABSDF2372"/>
<dbReference type="HOGENOM" id="CLU_093757_2_0_6"/>
<dbReference type="Proteomes" id="UP000001741">
    <property type="component" value="Chromosome"/>
</dbReference>
<dbReference type="GO" id="GO:0005737">
    <property type="term" value="C:cytoplasm"/>
    <property type="evidence" value="ECO:0007669"/>
    <property type="project" value="UniProtKB-SubCell"/>
</dbReference>
<dbReference type="GO" id="GO:0016151">
    <property type="term" value="F:nickel cation binding"/>
    <property type="evidence" value="ECO:0007669"/>
    <property type="project" value="UniProtKB-UniRule"/>
</dbReference>
<dbReference type="GO" id="GO:0051082">
    <property type="term" value="F:unfolded protein binding"/>
    <property type="evidence" value="ECO:0007669"/>
    <property type="project" value="UniProtKB-UniRule"/>
</dbReference>
<dbReference type="GO" id="GO:0006457">
    <property type="term" value="P:protein folding"/>
    <property type="evidence" value="ECO:0007669"/>
    <property type="project" value="InterPro"/>
</dbReference>
<dbReference type="GO" id="GO:0065003">
    <property type="term" value="P:protein-containing complex assembly"/>
    <property type="evidence" value="ECO:0007669"/>
    <property type="project" value="InterPro"/>
</dbReference>
<dbReference type="GO" id="GO:0019627">
    <property type="term" value="P:urea metabolic process"/>
    <property type="evidence" value="ECO:0007669"/>
    <property type="project" value="InterPro"/>
</dbReference>
<dbReference type="CDD" id="cd00571">
    <property type="entry name" value="UreE"/>
    <property type="match status" value="1"/>
</dbReference>
<dbReference type="Gene3D" id="2.60.260.20">
    <property type="entry name" value="Urease metallochaperone UreE, N-terminal domain"/>
    <property type="match status" value="1"/>
</dbReference>
<dbReference type="Gene3D" id="3.30.70.790">
    <property type="entry name" value="UreE, C-terminal domain"/>
    <property type="match status" value="1"/>
</dbReference>
<dbReference type="HAMAP" id="MF_00822">
    <property type="entry name" value="UreE"/>
    <property type="match status" value="1"/>
</dbReference>
<dbReference type="InterPro" id="IPR012406">
    <property type="entry name" value="UreE"/>
</dbReference>
<dbReference type="InterPro" id="IPR007864">
    <property type="entry name" value="UreE_C_dom"/>
</dbReference>
<dbReference type="InterPro" id="IPR004029">
    <property type="entry name" value="UreE_N"/>
</dbReference>
<dbReference type="InterPro" id="IPR036118">
    <property type="entry name" value="UreE_N_sf"/>
</dbReference>
<dbReference type="NCBIfam" id="NF009751">
    <property type="entry name" value="PRK13261.1-1"/>
    <property type="match status" value="1"/>
</dbReference>
<dbReference type="Pfam" id="PF05194">
    <property type="entry name" value="UreE_C"/>
    <property type="match status" value="1"/>
</dbReference>
<dbReference type="Pfam" id="PF02814">
    <property type="entry name" value="UreE_N"/>
    <property type="match status" value="1"/>
</dbReference>
<dbReference type="PIRSF" id="PIRSF036402">
    <property type="entry name" value="Ureas_acces_UreE"/>
    <property type="match status" value="1"/>
</dbReference>
<dbReference type="SMART" id="SM00988">
    <property type="entry name" value="UreE_N"/>
    <property type="match status" value="1"/>
</dbReference>
<dbReference type="SUPFAM" id="SSF69737">
    <property type="entry name" value="Urease metallochaperone UreE, C-terminal domain"/>
    <property type="match status" value="1"/>
</dbReference>
<dbReference type="SUPFAM" id="SSF69287">
    <property type="entry name" value="Urease metallochaperone UreE, N-terminal domain"/>
    <property type="match status" value="1"/>
</dbReference>